<reference key="1">
    <citation type="journal article" date="2008" name="Chem. Biol. Interact.">
        <title>Extending the Bacillus cereus group genomics to putative food-borne pathogens of different toxicity.</title>
        <authorList>
            <person name="Lapidus A."/>
            <person name="Goltsman E."/>
            <person name="Auger S."/>
            <person name="Galleron N."/>
            <person name="Segurens B."/>
            <person name="Dossat C."/>
            <person name="Land M.L."/>
            <person name="Broussolle V."/>
            <person name="Brillard J."/>
            <person name="Guinebretiere M.-H."/>
            <person name="Sanchis V."/>
            <person name="Nguen-the C."/>
            <person name="Lereclus D."/>
            <person name="Richardson P."/>
            <person name="Wincker P."/>
            <person name="Weissenbach J."/>
            <person name="Ehrlich S.D."/>
            <person name="Sorokin A."/>
        </authorList>
    </citation>
    <scope>NUCLEOTIDE SEQUENCE [LARGE SCALE GENOMIC DNA]</scope>
    <source>
        <strain>DSM 22905 / CIP 110041 / 391-98 / NVH 391-98</strain>
    </source>
</reference>
<gene>
    <name evidence="1" type="primary">carB</name>
    <name type="ordered locus">Bcer98_2535</name>
</gene>
<sequence>MPKRLDINTILVIGSGPIVIGQAAEFDYSGTQACQSLKEEGYKVILVNSNPATIMTDTATADKVYIEPLTLEFVSRIIRKERPDAILPTLGGQTGLNMAVELAKSGVLEECGVEILGTKLSAIEQAEDRDLFRTLMQELNEPTPPSEIVHTLDEAYEFVKEIGYPVIVRPAFTLGGTGGGICHNEEELIEIVTSGLKHSPVTQCLLEKSIAGFKEIEYEVMRDANDNAIVVCNMENIDPVGVHTGDSIVVAPSQTLSDREYQMLRNTSLRIIRALGIEGGCNVQLALDPYSFQYYVIEVNPRVSRSSALASKATGYPIAKLAAKIAVGLTLDEIVNPVTQKTYACFEPALDYVVSKIPRWPFDKFESANRTLGTQMKATGEVMSIGRNLEESLLKAVRSLELGIYHLELNHLKELDKETMKKRIIKADDERLFIVAEAIRQGVTKEEIHEWCEMDFFFLQKIENIVNMERKVKANVGDMEVLREAKEMGFSDHYIASAWNKTECEIYATRKENGIMPVFKMVDTCAAEFESATPYYYSTYGDENESIVTERKSVMVLGSGPIRIGQGVEFDYATVHSVWAIKEAGYEAIIVNNNPETVSTDFSISDKLYFEPLTIEDVMHIIDLEKPEGVIVQFGGQTAINLAAKLAERGVKILGTSLEDLDRAEDRDKFEAALTELGIPQPVGKTATTVEQAVAIAEEIGYPVLVRPSYVLGGRAMEIVYRQEELLHYMKNAVKVHADHPVLIDRYMVGKEIEVDAISDGENVYIPGIMEHIERAGVHSGDSIGVYPPQSLSAKVKEQIIENTIALGRGLKIVGLLNIQFVVFKDEVYVIEVNPRASRTVPFLSKITGVPMANIATKVILGKNLVEQGYETGYHPEDNEVYVKAPVFSFAKLRSVDTTLGPEMKSTGEVMGKDLTLEKALYKGLVAAGISIPTHGSVIITVADKDKEEAIEIARRFHEIGYNLLATAGTAKSLTEQNIPVQVVNKIDSEDYNLLDIIRQGKAQFVINTLTKGKQPARDGFRIRRESVENGVACLTSLDTTRAILRVLESMTFSAHTMKEIAPTTRHEVVHA</sequence>
<feature type="chain" id="PRO_1000085554" description="Carbamoyl phosphate synthase large chain">
    <location>
        <begin position="1"/>
        <end position="1072"/>
    </location>
</feature>
<feature type="domain" description="ATP-grasp 1" evidence="1">
    <location>
        <begin position="133"/>
        <end position="327"/>
    </location>
</feature>
<feature type="domain" description="ATP-grasp 2" evidence="1">
    <location>
        <begin position="671"/>
        <end position="861"/>
    </location>
</feature>
<feature type="domain" description="MGS-like" evidence="1">
    <location>
        <begin position="930"/>
        <end position="1072"/>
    </location>
</feature>
<feature type="region of interest" description="Carboxyphosphate synthetic domain" evidence="1">
    <location>
        <begin position="1"/>
        <end position="401"/>
    </location>
</feature>
<feature type="region of interest" description="Oligomerization domain" evidence="1">
    <location>
        <begin position="402"/>
        <end position="546"/>
    </location>
</feature>
<feature type="region of interest" description="Carbamoyl phosphate synthetic domain" evidence="1">
    <location>
        <begin position="547"/>
        <end position="929"/>
    </location>
</feature>
<feature type="region of interest" description="Allosteric domain" evidence="1">
    <location>
        <begin position="930"/>
        <end position="1072"/>
    </location>
</feature>
<feature type="binding site" evidence="1">
    <location>
        <position position="129"/>
    </location>
    <ligand>
        <name>ATP</name>
        <dbReference type="ChEBI" id="CHEBI:30616"/>
        <label>1</label>
    </ligand>
</feature>
<feature type="binding site" evidence="1">
    <location>
        <position position="169"/>
    </location>
    <ligand>
        <name>ATP</name>
        <dbReference type="ChEBI" id="CHEBI:30616"/>
        <label>1</label>
    </ligand>
</feature>
<feature type="binding site" evidence="1">
    <location>
        <position position="175"/>
    </location>
    <ligand>
        <name>ATP</name>
        <dbReference type="ChEBI" id="CHEBI:30616"/>
        <label>1</label>
    </ligand>
</feature>
<feature type="binding site" evidence="1">
    <location>
        <position position="176"/>
    </location>
    <ligand>
        <name>ATP</name>
        <dbReference type="ChEBI" id="CHEBI:30616"/>
        <label>1</label>
    </ligand>
</feature>
<feature type="binding site" evidence="1">
    <location>
        <position position="208"/>
    </location>
    <ligand>
        <name>ATP</name>
        <dbReference type="ChEBI" id="CHEBI:30616"/>
        <label>1</label>
    </ligand>
</feature>
<feature type="binding site" evidence="1">
    <location>
        <position position="210"/>
    </location>
    <ligand>
        <name>ATP</name>
        <dbReference type="ChEBI" id="CHEBI:30616"/>
        <label>1</label>
    </ligand>
</feature>
<feature type="binding site" evidence="1">
    <location>
        <position position="215"/>
    </location>
    <ligand>
        <name>ATP</name>
        <dbReference type="ChEBI" id="CHEBI:30616"/>
        <label>1</label>
    </ligand>
</feature>
<feature type="binding site" evidence="1">
    <location>
        <position position="241"/>
    </location>
    <ligand>
        <name>ATP</name>
        <dbReference type="ChEBI" id="CHEBI:30616"/>
        <label>1</label>
    </ligand>
</feature>
<feature type="binding site" evidence="1">
    <location>
        <position position="242"/>
    </location>
    <ligand>
        <name>ATP</name>
        <dbReference type="ChEBI" id="CHEBI:30616"/>
        <label>1</label>
    </ligand>
</feature>
<feature type="binding site" evidence="1">
    <location>
        <position position="243"/>
    </location>
    <ligand>
        <name>ATP</name>
        <dbReference type="ChEBI" id="CHEBI:30616"/>
        <label>1</label>
    </ligand>
</feature>
<feature type="binding site" evidence="1">
    <location>
        <position position="284"/>
    </location>
    <ligand>
        <name>ATP</name>
        <dbReference type="ChEBI" id="CHEBI:30616"/>
        <label>1</label>
    </ligand>
</feature>
<feature type="binding site" evidence="1">
    <location>
        <position position="284"/>
    </location>
    <ligand>
        <name>Mg(2+)</name>
        <dbReference type="ChEBI" id="CHEBI:18420"/>
        <label>1</label>
    </ligand>
</feature>
<feature type="binding site" evidence="1">
    <location>
        <position position="284"/>
    </location>
    <ligand>
        <name>Mn(2+)</name>
        <dbReference type="ChEBI" id="CHEBI:29035"/>
        <label>1</label>
    </ligand>
</feature>
<feature type="binding site" evidence="1">
    <location>
        <position position="298"/>
    </location>
    <ligand>
        <name>ATP</name>
        <dbReference type="ChEBI" id="CHEBI:30616"/>
        <label>1</label>
    </ligand>
</feature>
<feature type="binding site" evidence="1">
    <location>
        <position position="298"/>
    </location>
    <ligand>
        <name>Mg(2+)</name>
        <dbReference type="ChEBI" id="CHEBI:18420"/>
        <label>1</label>
    </ligand>
</feature>
<feature type="binding site" evidence="1">
    <location>
        <position position="298"/>
    </location>
    <ligand>
        <name>Mg(2+)</name>
        <dbReference type="ChEBI" id="CHEBI:18420"/>
        <label>2</label>
    </ligand>
</feature>
<feature type="binding site" evidence="1">
    <location>
        <position position="298"/>
    </location>
    <ligand>
        <name>Mn(2+)</name>
        <dbReference type="ChEBI" id="CHEBI:29035"/>
        <label>1</label>
    </ligand>
</feature>
<feature type="binding site" evidence="1">
    <location>
        <position position="298"/>
    </location>
    <ligand>
        <name>Mn(2+)</name>
        <dbReference type="ChEBI" id="CHEBI:29035"/>
        <label>2</label>
    </ligand>
</feature>
<feature type="binding site" evidence="1">
    <location>
        <position position="300"/>
    </location>
    <ligand>
        <name>Mg(2+)</name>
        <dbReference type="ChEBI" id="CHEBI:18420"/>
        <label>2</label>
    </ligand>
</feature>
<feature type="binding site" evidence="1">
    <location>
        <position position="300"/>
    </location>
    <ligand>
        <name>Mn(2+)</name>
        <dbReference type="ChEBI" id="CHEBI:29035"/>
        <label>2</label>
    </ligand>
</feature>
<feature type="binding site" evidence="1">
    <location>
        <position position="707"/>
    </location>
    <ligand>
        <name>ATP</name>
        <dbReference type="ChEBI" id="CHEBI:30616"/>
        <label>2</label>
    </ligand>
</feature>
<feature type="binding site" evidence="1">
    <location>
        <position position="746"/>
    </location>
    <ligand>
        <name>ATP</name>
        <dbReference type="ChEBI" id="CHEBI:30616"/>
        <label>2</label>
    </ligand>
</feature>
<feature type="binding site" evidence="1">
    <location>
        <position position="752"/>
    </location>
    <ligand>
        <name>ATP</name>
        <dbReference type="ChEBI" id="CHEBI:30616"/>
        <label>2</label>
    </ligand>
</feature>
<feature type="binding site" evidence="1">
    <location>
        <position position="777"/>
    </location>
    <ligand>
        <name>ATP</name>
        <dbReference type="ChEBI" id="CHEBI:30616"/>
        <label>2</label>
    </ligand>
</feature>
<feature type="binding site" evidence="1">
    <location>
        <position position="778"/>
    </location>
    <ligand>
        <name>ATP</name>
        <dbReference type="ChEBI" id="CHEBI:30616"/>
        <label>2</label>
    </ligand>
</feature>
<feature type="binding site" evidence="1">
    <location>
        <position position="779"/>
    </location>
    <ligand>
        <name>ATP</name>
        <dbReference type="ChEBI" id="CHEBI:30616"/>
        <label>2</label>
    </ligand>
</feature>
<feature type="binding site" evidence="1">
    <location>
        <position position="780"/>
    </location>
    <ligand>
        <name>ATP</name>
        <dbReference type="ChEBI" id="CHEBI:30616"/>
        <label>2</label>
    </ligand>
</feature>
<feature type="binding site" evidence="1">
    <location>
        <position position="820"/>
    </location>
    <ligand>
        <name>ATP</name>
        <dbReference type="ChEBI" id="CHEBI:30616"/>
        <label>2</label>
    </ligand>
</feature>
<feature type="binding site" evidence="1">
    <location>
        <position position="820"/>
    </location>
    <ligand>
        <name>Mg(2+)</name>
        <dbReference type="ChEBI" id="CHEBI:18420"/>
        <label>3</label>
    </ligand>
</feature>
<feature type="binding site" evidence="1">
    <location>
        <position position="820"/>
    </location>
    <ligand>
        <name>Mn(2+)</name>
        <dbReference type="ChEBI" id="CHEBI:29035"/>
        <label>3</label>
    </ligand>
</feature>
<feature type="binding site" evidence="1">
    <location>
        <position position="832"/>
    </location>
    <ligand>
        <name>ATP</name>
        <dbReference type="ChEBI" id="CHEBI:30616"/>
        <label>2</label>
    </ligand>
</feature>
<feature type="binding site" evidence="1">
    <location>
        <position position="832"/>
    </location>
    <ligand>
        <name>Mg(2+)</name>
        <dbReference type="ChEBI" id="CHEBI:18420"/>
        <label>3</label>
    </ligand>
</feature>
<feature type="binding site" evidence="1">
    <location>
        <position position="832"/>
    </location>
    <ligand>
        <name>Mg(2+)</name>
        <dbReference type="ChEBI" id="CHEBI:18420"/>
        <label>4</label>
    </ligand>
</feature>
<feature type="binding site" evidence="1">
    <location>
        <position position="832"/>
    </location>
    <ligand>
        <name>Mn(2+)</name>
        <dbReference type="ChEBI" id="CHEBI:29035"/>
        <label>3</label>
    </ligand>
</feature>
<feature type="binding site" evidence="1">
    <location>
        <position position="832"/>
    </location>
    <ligand>
        <name>Mn(2+)</name>
        <dbReference type="ChEBI" id="CHEBI:29035"/>
        <label>4</label>
    </ligand>
</feature>
<feature type="binding site" evidence="1">
    <location>
        <position position="834"/>
    </location>
    <ligand>
        <name>Mg(2+)</name>
        <dbReference type="ChEBI" id="CHEBI:18420"/>
        <label>4</label>
    </ligand>
</feature>
<feature type="binding site" evidence="1">
    <location>
        <position position="834"/>
    </location>
    <ligand>
        <name>Mn(2+)</name>
        <dbReference type="ChEBI" id="CHEBI:29035"/>
        <label>4</label>
    </ligand>
</feature>
<accession>A7GRL1</accession>
<organism>
    <name type="scientific">Bacillus cytotoxicus (strain DSM 22905 / CIP 110041 / 391-98 / NVH 391-98)</name>
    <dbReference type="NCBI Taxonomy" id="315749"/>
    <lineage>
        <taxon>Bacteria</taxon>
        <taxon>Bacillati</taxon>
        <taxon>Bacillota</taxon>
        <taxon>Bacilli</taxon>
        <taxon>Bacillales</taxon>
        <taxon>Bacillaceae</taxon>
        <taxon>Bacillus</taxon>
        <taxon>Bacillus cereus group</taxon>
    </lineage>
</organism>
<name>CARB_BACCN</name>
<dbReference type="EC" id="6.3.4.16" evidence="1"/>
<dbReference type="EC" id="6.3.5.5" evidence="1"/>
<dbReference type="EMBL" id="CP000764">
    <property type="protein sequence ID" value="ABS22769.1"/>
    <property type="molecule type" value="Genomic_DNA"/>
</dbReference>
<dbReference type="RefSeq" id="WP_012094976.1">
    <property type="nucleotide sequence ID" value="NC_009674.1"/>
</dbReference>
<dbReference type="SMR" id="A7GRL1"/>
<dbReference type="STRING" id="315749.Bcer98_2535"/>
<dbReference type="GeneID" id="33897789"/>
<dbReference type="KEGG" id="bcy:Bcer98_2535"/>
<dbReference type="eggNOG" id="COG0458">
    <property type="taxonomic scope" value="Bacteria"/>
</dbReference>
<dbReference type="HOGENOM" id="CLU_000513_1_0_9"/>
<dbReference type="OrthoDB" id="9804197at2"/>
<dbReference type="UniPathway" id="UPA00068">
    <property type="reaction ID" value="UER00171"/>
</dbReference>
<dbReference type="UniPathway" id="UPA00070">
    <property type="reaction ID" value="UER00115"/>
</dbReference>
<dbReference type="Proteomes" id="UP000002300">
    <property type="component" value="Chromosome"/>
</dbReference>
<dbReference type="GO" id="GO:0005737">
    <property type="term" value="C:cytoplasm"/>
    <property type="evidence" value="ECO:0007669"/>
    <property type="project" value="TreeGrafter"/>
</dbReference>
<dbReference type="GO" id="GO:0005524">
    <property type="term" value="F:ATP binding"/>
    <property type="evidence" value="ECO:0007669"/>
    <property type="project" value="UniProtKB-UniRule"/>
</dbReference>
<dbReference type="GO" id="GO:0004087">
    <property type="term" value="F:carbamoyl-phosphate synthase (ammonia) activity"/>
    <property type="evidence" value="ECO:0007669"/>
    <property type="project" value="RHEA"/>
</dbReference>
<dbReference type="GO" id="GO:0004088">
    <property type="term" value="F:carbamoyl-phosphate synthase (glutamine-hydrolyzing) activity"/>
    <property type="evidence" value="ECO:0007669"/>
    <property type="project" value="UniProtKB-UniRule"/>
</dbReference>
<dbReference type="GO" id="GO:0046872">
    <property type="term" value="F:metal ion binding"/>
    <property type="evidence" value="ECO:0007669"/>
    <property type="project" value="UniProtKB-KW"/>
</dbReference>
<dbReference type="GO" id="GO:0044205">
    <property type="term" value="P:'de novo' UMP biosynthetic process"/>
    <property type="evidence" value="ECO:0007669"/>
    <property type="project" value="UniProtKB-UniRule"/>
</dbReference>
<dbReference type="GO" id="GO:0006541">
    <property type="term" value="P:glutamine metabolic process"/>
    <property type="evidence" value="ECO:0007669"/>
    <property type="project" value="TreeGrafter"/>
</dbReference>
<dbReference type="GO" id="GO:0006526">
    <property type="term" value="P:L-arginine biosynthetic process"/>
    <property type="evidence" value="ECO:0007669"/>
    <property type="project" value="UniProtKB-UniRule"/>
</dbReference>
<dbReference type="CDD" id="cd01424">
    <property type="entry name" value="MGS_CPS_II"/>
    <property type="match status" value="1"/>
</dbReference>
<dbReference type="FunFam" id="1.10.1030.10:FF:000002">
    <property type="entry name" value="Carbamoyl-phosphate synthase large chain"/>
    <property type="match status" value="1"/>
</dbReference>
<dbReference type="FunFam" id="3.30.1490.20:FF:000001">
    <property type="entry name" value="Carbamoyl-phosphate synthase large chain"/>
    <property type="match status" value="1"/>
</dbReference>
<dbReference type="FunFam" id="3.30.470.20:FF:000001">
    <property type="entry name" value="Carbamoyl-phosphate synthase large chain"/>
    <property type="match status" value="1"/>
</dbReference>
<dbReference type="FunFam" id="3.30.470.20:FF:000026">
    <property type="entry name" value="Carbamoyl-phosphate synthase large chain"/>
    <property type="match status" value="1"/>
</dbReference>
<dbReference type="FunFam" id="3.40.50.1380:FF:000011">
    <property type="entry name" value="Carbamoyl-phosphate synthase large chain"/>
    <property type="match status" value="1"/>
</dbReference>
<dbReference type="FunFam" id="3.40.50.20:FF:000001">
    <property type="entry name" value="Carbamoyl-phosphate synthase large chain"/>
    <property type="match status" value="2"/>
</dbReference>
<dbReference type="Gene3D" id="3.40.50.20">
    <property type="match status" value="2"/>
</dbReference>
<dbReference type="Gene3D" id="3.30.1490.20">
    <property type="entry name" value="ATP-grasp fold, A domain"/>
    <property type="match status" value="1"/>
</dbReference>
<dbReference type="Gene3D" id="3.30.470.20">
    <property type="entry name" value="ATP-grasp fold, B domain"/>
    <property type="match status" value="2"/>
</dbReference>
<dbReference type="Gene3D" id="1.10.1030.10">
    <property type="entry name" value="Carbamoyl-phosphate synthetase, large subunit oligomerisation domain"/>
    <property type="match status" value="1"/>
</dbReference>
<dbReference type="Gene3D" id="3.40.50.1380">
    <property type="entry name" value="Methylglyoxal synthase-like domain"/>
    <property type="match status" value="1"/>
</dbReference>
<dbReference type="HAMAP" id="MF_01210_A">
    <property type="entry name" value="CPSase_L_chain_A"/>
    <property type="match status" value="1"/>
</dbReference>
<dbReference type="HAMAP" id="MF_01210_B">
    <property type="entry name" value="CPSase_L_chain_B"/>
    <property type="match status" value="1"/>
</dbReference>
<dbReference type="InterPro" id="IPR011761">
    <property type="entry name" value="ATP-grasp"/>
</dbReference>
<dbReference type="InterPro" id="IPR013815">
    <property type="entry name" value="ATP_grasp_subdomain_1"/>
</dbReference>
<dbReference type="InterPro" id="IPR006275">
    <property type="entry name" value="CarbamoylP_synth_lsu"/>
</dbReference>
<dbReference type="InterPro" id="IPR005480">
    <property type="entry name" value="CarbamoylP_synth_lsu_oligo"/>
</dbReference>
<dbReference type="InterPro" id="IPR036897">
    <property type="entry name" value="CarbamoylP_synth_lsu_oligo_sf"/>
</dbReference>
<dbReference type="InterPro" id="IPR005479">
    <property type="entry name" value="CbamoylP_synth_lsu-like_ATP-bd"/>
</dbReference>
<dbReference type="InterPro" id="IPR005483">
    <property type="entry name" value="CbamoylP_synth_lsu_CPSase_dom"/>
</dbReference>
<dbReference type="InterPro" id="IPR011607">
    <property type="entry name" value="MGS-like_dom"/>
</dbReference>
<dbReference type="InterPro" id="IPR036914">
    <property type="entry name" value="MGS-like_dom_sf"/>
</dbReference>
<dbReference type="InterPro" id="IPR033937">
    <property type="entry name" value="MGS_CPS_CarB"/>
</dbReference>
<dbReference type="InterPro" id="IPR016185">
    <property type="entry name" value="PreATP-grasp_dom_sf"/>
</dbReference>
<dbReference type="NCBIfam" id="TIGR01369">
    <property type="entry name" value="CPSaseII_lrg"/>
    <property type="match status" value="1"/>
</dbReference>
<dbReference type="NCBIfam" id="NF003671">
    <property type="entry name" value="PRK05294.1"/>
    <property type="match status" value="1"/>
</dbReference>
<dbReference type="NCBIfam" id="NF009455">
    <property type="entry name" value="PRK12815.1"/>
    <property type="match status" value="1"/>
</dbReference>
<dbReference type="PANTHER" id="PTHR11405:SF53">
    <property type="entry name" value="CARBAMOYL-PHOSPHATE SYNTHASE [AMMONIA], MITOCHONDRIAL"/>
    <property type="match status" value="1"/>
</dbReference>
<dbReference type="PANTHER" id="PTHR11405">
    <property type="entry name" value="CARBAMOYLTRANSFERASE FAMILY MEMBER"/>
    <property type="match status" value="1"/>
</dbReference>
<dbReference type="Pfam" id="PF02786">
    <property type="entry name" value="CPSase_L_D2"/>
    <property type="match status" value="2"/>
</dbReference>
<dbReference type="Pfam" id="PF02787">
    <property type="entry name" value="CPSase_L_D3"/>
    <property type="match status" value="1"/>
</dbReference>
<dbReference type="Pfam" id="PF02142">
    <property type="entry name" value="MGS"/>
    <property type="match status" value="1"/>
</dbReference>
<dbReference type="PRINTS" id="PR00098">
    <property type="entry name" value="CPSASE"/>
</dbReference>
<dbReference type="SMART" id="SM01096">
    <property type="entry name" value="CPSase_L_D3"/>
    <property type="match status" value="1"/>
</dbReference>
<dbReference type="SMART" id="SM01209">
    <property type="entry name" value="GARS_A"/>
    <property type="match status" value="1"/>
</dbReference>
<dbReference type="SMART" id="SM00851">
    <property type="entry name" value="MGS"/>
    <property type="match status" value="1"/>
</dbReference>
<dbReference type="SUPFAM" id="SSF48108">
    <property type="entry name" value="Carbamoyl phosphate synthetase, large subunit connection domain"/>
    <property type="match status" value="1"/>
</dbReference>
<dbReference type="SUPFAM" id="SSF56059">
    <property type="entry name" value="Glutathione synthetase ATP-binding domain-like"/>
    <property type="match status" value="2"/>
</dbReference>
<dbReference type="SUPFAM" id="SSF52335">
    <property type="entry name" value="Methylglyoxal synthase-like"/>
    <property type="match status" value="1"/>
</dbReference>
<dbReference type="SUPFAM" id="SSF52440">
    <property type="entry name" value="PreATP-grasp domain"/>
    <property type="match status" value="2"/>
</dbReference>
<dbReference type="PROSITE" id="PS50975">
    <property type="entry name" value="ATP_GRASP"/>
    <property type="match status" value="2"/>
</dbReference>
<dbReference type="PROSITE" id="PS00866">
    <property type="entry name" value="CPSASE_1"/>
    <property type="match status" value="2"/>
</dbReference>
<dbReference type="PROSITE" id="PS00867">
    <property type="entry name" value="CPSASE_2"/>
    <property type="match status" value="2"/>
</dbReference>
<dbReference type="PROSITE" id="PS51855">
    <property type="entry name" value="MGS"/>
    <property type="match status" value="1"/>
</dbReference>
<protein>
    <recommendedName>
        <fullName evidence="1">Carbamoyl phosphate synthase large chain</fullName>
        <ecNumber evidence="1">6.3.4.16</ecNumber>
        <ecNumber evidence="1">6.3.5.5</ecNumber>
    </recommendedName>
    <alternativeName>
        <fullName evidence="1">Carbamoyl phosphate synthetase ammonia chain</fullName>
    </alternativeName>
</protein>
<comment type="function">
    <text evidence="1">Large subunit of the glutamine-dependent carbamoyl phosphate synthetase (CPSase). CPSase catalyzes the formation of carbamoyl phosphate from the ammonia moiety of glutamine, carbonate, and phosphate donated by ATP, constituting the first step of 2 biosynthetic pathways, one leading to arginine and/or urea and the other to pyrimidine nucleotides. The large subunit (synthetase) binds the substrates ammonia (free or transferred from glutamine from the small subunit), hydrogencarbonate and ATP and carries out an ATP-coupled ligase reaction, activating hydrogencarbonate by forming carboxy phosphate which reacts with ammonia to form carbamoyl phosphate.</text>
</comment>
<comment type="catalytic activity">
    <reaction evidence="1">
        <text>hydrogencarbonate + L-glutamine + 2 ATP + H2O = carbamoyl phosphate + L-glutamate + 2 ADP + phosphate + 2 H(+)</text>
        <dbReference type="Rhea" id="RHEA:18633"/>
        <dbReference type="ChEBI" id="CHEBI:15377"/>
        <dbReference type="ChEBI" id="CHEBI:15378"/>
        <dbReference type="ChEBI" id="CHEBI:17544"/>
        <dbReference type="ChEBI" id="CHEBI:29985"/>
        <dbReference type="ChEBI" id="CHEBI:30616"/>
        <dbReference type="ChEBI" id="CHEBI:43474"/>
        <dbReference type="ChEBI" id="CHEBI:58228"/>
        <dbReference type="ChEBI" id="CHEBI:58359"/>
        <dbReference type="ChEBI" id="CHEBI:456216"/>
        <dbReference type="EC" id="6.3.5.5"/>
    </reaction>
</comment>
<comment type="catalytic activity">
    <molecule>Carbamoyl phosphate synthase large chain</molecule>
    <reaction evidence="1">
        <text>hydrogencarbonate + NH4(+) + 2 ATP = carbamoyl phosphate + 2 ADP + phosphate + 2 H(+)</text>
        <dbReference type="Rhea" id="RHEA:18029"/>
        <dbReference type="ChEBI" id="CHEBI:15378"/>
        <dbReference type="ChEBI" id="CHEBI:17544"/>
        <dbReference type="ChEBI" id="CHEBI:28938"/>
        <dbReference type="ChEBI" id="CHEBI:30616"/>
        <dbReference type="ChEBI" id="CHEBI:43474"/>
        <dbReference type="ChEBI" id="CHEBI:58228"/>
        <dbReference type="ChEBI" id="CHEBI:456216"/>
        <dbReference type="EC" id="6.3.4.16"/>
    </reaction>
</comment>
<comment type="cofactor">
    <cofactor evidence="1">
        <name>Mg(2+)</name>
        <dbReference type="ChEBI" id="CHEBI:18420"/>
    </cofactor>
    <cofactor evidence="1">
        <name>Mn(2+)</name>
        <dbReference type="ChEBI" id="CHEBI:29035"/>
    </cofactor>
    <text evidence="1">Binds 4 Mg(2+) or Mn(2+) ions per subunit.</text>
</comment>
<comment type="pathway">
    <text evidence="1">Amino-acid biosynthesis; L-arginine biosynthesis; carbamoyl phosphate from bicarbonate: step 1/1.</text>
</comment>
<comment type="pathway">
    <text evidence="1">Pyrimidine metabolism; UMP biosynthesis via de novo pathway; (S)-dihydroorotate from bicarbonate: step 1/3.</text>
</comment>
<comment type="subunit">
    <text evidence="1">Composed of two chains; the small (or glutamine) chain promotes the hydrolysis of glutamine to ammonia, which is used by the large (or ammonia) chain to synthesize carbamoyl phosphate. Tetramer of heterodimers (alpha,beta)4.</text>
</comment>
<comment type="domain">
    <text evidence="1">The large subunit is composed of 2 ATP-grasp domains that are involved in binding the 2 ATP molecules needed for carbamoyl phosphate synthesis. The N-terminal ATP-grasp domain (referred to as the carboxyphosphate synthetic component) catalyzes the ATP-dependent phosphorylation of hydrogencarbonate to carboxyphosphate and the subsequent nucleophilic attack by ammonia to form a carbamate intermediate. The C-terminal ATP-grasp domain (referred to as the carbamoyl phosphate synthetic component) then catalyzes the phosphorylation of carbamate with the second ATP to form the end product carbamoyl phosphate. The reactive and unstable enzyme intermediates are sequentially channeled from one active site to the next through the interior of the protein over a distance of at least 96 A.</text>
</comment>
<comment type="similarity">
    <text evidence="1">Belongs to the CarB family.</text>
</comment>
<proteinExistence type="inferred from homology"/>
<evidence type="ECO:0000255" key="1">
    <source>
        <dbReference type="HAMAP-Rule" id="MF_01210"/>
    </source>
</evidence>
<keyword id="KW-0028">Amino-acid biosynthesis</keyword>
<keyword id="KW-0055">Arginine biosynthesis</keyword>
<keyword id="KW-0067">ATP-binding</keyword>
<keyword id="KW-0436">Ligase</keyword>
<keyword id="KW-0460">Magnesium</keyword>
<keyword id="KW-0464">Manganese</keyword>
<keyword id="KW-0479">Metal-binding</keyword>
<keyword id="KW-0547">Nucleotide-binding</keyword>
<keyword id="KW-0665">Pyrimidine biosynthesis</keyword>
<keyword id="KW-0677">Repeat</keyword>